<gene>
    <name evidence="1" type="primary">glpB</name>
    <name type="ordered locus">YPA_0197</name>
</gene>
<name>GLPB_YERPA</name>
<dbReference type="EC" id="1.1.5.3" evidence="1"/>
<dbReference type="EMBL" id="CP000308">
    <property type="protein sequence ID" value="ABG12166.1"/>
    <property type="molecule type" value="Genomic_DNA"/>
</dbReference>
<dbReference type="RefSeq" id="WP_002211492.1">
    <property type="nucleotide sequence ID" value="NZ_CP009906.1"/>
</dbReference>
<dbReference type="GeneID" id="57974883"/>
<dbReference type="KEGG" id="ypa:YPA_0197"/>
<dbReference type="UniPathway" id="UPA00618">
    <property type="reaction ID" value="UER00673"/>
</dbReference>
<dbReference type="Proteomes" id="UP000001971">
    <property type="component" value="Chromosome"/>
</dbReference>
<dbReference type="GO" id="GO:0009331">
    <property type="term" value="C:glycerol-3-phosphate dehydrogenase (FAD) complex"/>
    <property type="evidence" value="ECO:0007669"/>
    <property type="project" value="InterPro"/>
</dbReference>
<dbReference type="GO" id="GO:0004368">
    <property type="term" value="F:glycerol-3-phosphate dehydrogenase (quinone) activity"/>
    <property type="evidence" value="ECO:0007669"/>
    <property type="project" value="UniProtKB-UniRule"/>
</dbReference>
<dbReference type="GO" id="GO:0019563">
    <property type="term" value="P:glycerol catabolic process"/>
    <property type="evidence" value="ECO:0007669"/>
    <property type="project" value="UniProtKB-UniRule"/>
</dbReference>
<dbReference type="Gene3D" id="3.50.50.60">
    <property type="entry name" value="FAD/NAD(P)-binding domain"/>
    <property type="match status" value="1"/>
</dbReference>
<dbReference type="HAMAP" id="MF_00753">
    <property type="entry name" value="Glycerol3P_GlpB"/>
    <property type="match status" value="1"/>
</dbReference>
<dbReference type="InterPro" id="IPR003953">
    <property type="entry name" value="FAD-dep_OxRdtase_2_FAD-bd"/>
</dbReference>
<dbReference type="InterPro" id="IPR036188">
    <property type="entry name" value="FAD/NAD-bd_sf"/>
</dbReference>
<dbReference type="InterPro" id="IPR009158">
    <property type="entry name" value="G3P_DH_GlpB_su"/>
</dbReference>
<dbReference type="NCBIfam" id="TIGR03378">
    <property type="entry name" value="glycerol3P_GlpB"/>
    <property type="match status" value="1"/>
</dbReference>
<dbReference type="NCBIfam" id="NF003718">
    <property type="entry name" value="PRK05329.1-1"/>
    <property type="match status" value="1"/>
</dbReference>
<dbReference type="NCBIfam" id="NF003719">
    <property type="entry name" value="PRK05329.1-2"/>
    <property type="match status" value="1"/>
</dbReference>
<dbReference type="NCBIfam" id="NF003720">
    <property type="entry name" value="PRK05329.1-3"/>
    <property type="match status" value="1"/>
</dbReference>
<dbReference type="NCBIfam" id="NF003721">
    <property type="entry name" value="PRK05329.1-4"/>
    <property type="match status" value="1"/>
</dbReference>
<dbReference type="PANTHER" id="PTHR43734:SF7">
    <property type="entry name" value="4,4'-DIAPONEUROSPORENE OXYGENASE"/>
    <property type="match status" value="1"/>
</dbReference>
<dbReference type="PANTHER" id="PTHR43734">
    <property type="entry name" value="PHYTOENE DESATURASE"/>
    <property type="match status" value="1"/>
</dbReference>
<dbReference type="Pfam" id="PF00890">
    <property type="entry name" value="FAD_binding_2"/>
    <property type="match status" value="1"/>
</dbReference>
<dbReference type="PIRSF" id="PIRSF000141">
    <property type="entry name" value="Anaerobic_G3P_dh"/>
    <property type="match status" value="1"/>
</dbReference>
<dbReference type="SUPFAM" id="SSF51905">
    <property type="entry name" value="FAD/NAD(P)-binding domain"/>
    <property type="match status" value="1"/>
</dbReference>
<comment type="function">
    <text evidence="1">Conversion of glycerol 3-phosphate to dihydroxyacetone. Uses fumarate or nitrate as electron acceptor.</text>
</comment>
<comment type="catalytic activity">
    <reaction evidence="1">
        <text>a quinone + sn-glycerol 3-phosphate = dihydroxyacetone phosphate + a quinol</text>
        <dbReference type="Rhea" id="RHEA:18977"/>
        <dbReference type="ChEBI" id="CHEBI:24646"/>
        <dbReference type="ChEBI" id="CHEBI:57597"/>
        <dbReference type="ChEBI" id="CHEBI:57642"/>
        <dbReference type="ChEBI" id="CHEBI:132124"/>
        <dbReference type="EC" id="1.1.5.3"/>
    </reaction>
</comment>
<comment type="cofactor">
    <cofactor evidence="1">
        <name>FMN</name>
        <dbReference type="ChEBI" id="CHEBI:58210"/>
    </cofactor>
</comment>
<comment type="pathway">
    <text evidence="1">Polyol metabolism; glycerol degradation via glycerol kinase pathway; glycerone phosphate from sn-glycerol 3-phosphate (anaerobic route): step 1/1.</text>
</comment>
<comment type="subunit">
    <text evidence="1">Composed of a catalytic GlpA/B dimer and of membrane bound GlpC.</text>
</comment>
<comment type="similarity">
    <text evidence="1">Belongs to the anaerobic G-3-P dehydrogenase subunit B family.</text>
</comment>
<sequence length="424" mass="45506">MKFDVIIIGGGLAGLACGIRLAEQGKYCAIVSSGQNALHFSSGSLDLLAKLPDGQAVSQPLSALSALAELAPEHPYSKMRNITQLDELVQEAEALLRRCGLDIVGSSAENHLRLTPLGSCRPTWLSLADIPVAPLNGPLPWQRVAVIGIEGFLDFQPQMVASALQDQGIDATADYLHLPALDRLRDNPSEFRAVNIARILDLPENRQPLADELSRLSSTAEMILLPACIGLDKSAPLDALRAVVGKPIQLLPTLPPSLLGMRLHQALRHRFQQLGGLVMPGDAVLRAELVDNRITGLYSRNHGDIPLRAAQMVLASGSFFSNGLVATFDKIYEPILDLDILSLPHRADWSHSNLFAPQPYLQFGVNTDNHLRPLRGGVALENLHAIGAVLGGYDPLQQGCGAGVSLTSAVFVAEQIISEMAVTL</sequence>
<keyword id="KW-0285">Flavoprotein</keyword>
<keyword id="KW-0288">FMN</keyword>
<keyword id="KW-0560">Oxidoreductase</keyword>
<accession>Q1CBK6</accession>
<protein>
    <recommendedName>
        <fullName evidence="1">Anaerobic glycerol-3-phosphate dehydrogenase subunit B</fullName>
        <shortName evidence="1">Anaerobic G-3-P dehydrogenase subunit B</shortName>
        <shortName evidence="1">Anaerobic G3Pdhase B</shortName>
        <ecNumber evidence="1">1.1.5.3</ecNumber>
    </recommendedName>
</protein>
<organism>
    <name type="scientific">Yersinia pestis bv. Antiqua (strain Antiqua)</name>
    <dbReference type="NCBI Taxonomy" id="360102"/>
    <lineage>
        <taxon>Bacteria</taxon>
        <taxon>Pseudomonadati</taxon>
        <taxon>Pseudomonadota</taxon>
        <taxon>Gammaproteobacteria</taxon>
        <taxon>Enterobacterales</taxon>
        <taxon>Yersiniaceae</taxon>
        <taxon>Yersinia</taxon>
    </lineage>
</organism>
<proteinExistence type="inferred from homology"/>
<evidence type="ECO:0000255" key="1">
    <source>
        <dbReference type="HAMAP-Rule" id="MF_00753"/>
    </source>
</evidence>
<feature type="chain" id="PRO_0000258911" description="Anaerobic glycerol-3-phosphate dehydrogenase subunit B">
    <location>
        <begin position="1"/>
        <end position="424"/>
    </location>
</feature>
<reference key="1">
    <citation type="journal article" date="2006" name="J. Bacteriol.">
        <title>Complete genome sequence of Yersinia pestis strains Antiqua and Nepal516: evidence of gene reduction in an emerging pathogen.</title>
        <authorList>
            <person name="Chain P.S.G."/>
            <person name="Hu P."/>
            <person name="Malfatti S.A."/>
            <person name="Radnedge L."/>
            <person name="Larimer F."/>
            <person name="Vergez L.M."/>
            <person name="Worsham P."/>
            <person name="Chu M.C."/>
            <person name="Andersen G.L."/>
        </authorList>
    </citation>
    <scope>NUCLEOTIDE SEQUENCE [LARGE SCALE GENOMIC DNA]</scope>
    <source>
        <strain>Antiqua</strain>
    </source>
</reference>